<comment type="function">
    <text evidence="1">Catalyzes the decarboxylation of four acetate groups of uroporphyrinogen-III to yield coproporphyrinogen-III.</text>
</comment>
<comment type="catalytic activity">
    <reaction evidence="1">
        <text>uroporphyrinogen III + 4 H(+) = coproporphyrinogen III + 4 CO2</text>
        <dbReference type="Rhea" id="RHEA:19865"/>
        <dbReference type="ChEBI" id="CHEBI:15378"/>
        <dbReference type="ChEBI" id="CHEBI:16526"/>
        <dbReference type="ChEBI" id="CHEBI:57308"/>
        <dbReference type="ChEBI" id="CHEBI:57309"/>
        <dbReference type="EC" id="4.1.1.37"/>
    </reaction>
</comment>
<comment type="pathway">
    <text evidence="1">Porphyrin-containing compound metabolism; protoporphyrin-IX biosynthesis; coproporphyrinogen-III from 5-aminolevulinate: step 4/4.</text>
</comment>
<comment type="subunit">
    <text evidence="1">Homodimer.</text>
</comment>
<comment type="subcellular location">
    <subcellularLocation>
        <location evidence="1">Cytoplasm</location>
    </subcellularLocation>
</comment>
<comment type="similarity">
    <text evidence="1">Belongs to the uroporphyrinogen decarboxylase family.</text>
</comment>
<feature type="chain" id="PRO_1000023876" description="Uroporphyrinogen decarboxylase">
    <location>
        <begin position="1"/>
        <end position="341"/>
    </location>
</feature>
<feature type="binding site" evidence="1">
    <location>
        <begin position="23"/>
        <end position="27"/>
    </location>
    <ligand>
        <name>substrate</name>
    </ligand>
</feature>
<feature type="binding site" evidence="1">
    <location>
        <position position="73"/>
    </location>
    <ligand>
        <name>substrate</name>
    </ligand>
</feature>
<feature type="binding site" evidence="1">
    <location>
        <position position="148"/>
    </location>
    <ligand>
        <name>substrate</name>
    </ligand>
</feature>
<feature type="binding site" evidence="1">
    <location>
        <position position="203"/>
    </location>
    <ligand>
        <name>substrate</name>
    </ligand>
</feature>
<feature type="binding site" evidence="1">
    <location>
        <position position="318"/>
    </location>
    <ligand>
        <name>substrate</name>
    </ligand>
</feature>
<feature type="site" description="Transition state stabilizer" evidence="1">
    <location>
        <position position="73"/>
    </location>
</feature>
<name>DCUP_BRUA2</name>
<evidence type="ECO:0000255" key="1">
    <source>
        <dbReference type="HAMAP-Rule" id="MF_00218"/>
    </source>
</evidence>
<gene>
    <name evidence="1" type="primary">hemE</name>
    <name type="ordered locus">BAB1_2067</name>
</gene>
<organism>
    <name type="scientific">Brucella abortus (strain 2308)</name>
    <dbReference type="NCBI Taxonomy" id="359391"/>
    <lineage>
        <taxon>Bacteria</taxon>
        <taxon>Pseudomonadati</taxon>
        <taxon>Pseudomonadota</taxon>
        <taxon>Alphaproteobacteria</taxon>
        <taxon>Hyphomicrobiales</taxon>
        <taxon>Brucellaceae</taxon>
        <taxon>Brucella/Ochrobactrum group</taxon>
        <taxon>Brucella</taxon>
    </lineage>
</organism>
<keyword id="KW-0963">Cytoplasm</keyword>
<keyword id="KW-0210">Decarboxylase</keyword>
<keyword id="KW-0456">Lyase</keyword>
<keyword id="KW-0627">Porphyrin biosynthesis</keyword>
<keyword id="KW-1185">Reference proteome</keyword>
<dbReference type="EC" id="4.1.1.37" evidence="1"/>
<dbReference type="EMBL" id="AM040264">
    <property type="protein sequence ID" value="CAJ12023.1"/>
    <property type="molecule type" value="Genomic_DNA"/>
</dbReference>
<dbReference type="RefSeq" id="WP_002965130.1">
    <property type="nucleotide sequence ID" value="NZ_KN046823.1"/>
</dbReference>
<dbReference type="SMR" id="Q2YR07"/>
<dbReference type="STRING" id="359391.BAB1_2067"/>
<dbReference type="GeneID" id="93017623"/>
<dbReference type="KEGG" id="bmf:BAB1_2067"/>
<dbReference type="PATRIC" id="fig|359391.11.peg.1299"/>
<dbReference type="HOGENOM" id="CLU_040933_0_0_5"/>
<dbReference type="PhylomeDB" id="Q2YR07"/>
<dbReference type="UniPathway" id="UPA00251">
    <property type="reaction ID" value="UER00321"/>
</dbReference>
<dbReference type="Proteomes" id="UP000002719">
    <property type="component" value="Chromosome I"/>
</dbReference>
<dbReference type="GO" id="GO:0005829">
    <property type="term" value="C:cytosol"/>
    <property type="evidence" value="ECO:0007669"/>
    <property type="project" value="TreeGrafter"/>
</dbReference>
<dbReference type="GO" id="GO:0004853">
    <property type="term" value="F:uroporphyrinogen decarboxylase activity"/>
    <property type="evidence" value="ECO:0007669"/>
    <property type="project" value="UniProtKB-UniRule"/>
</dbReference>
<dbReference type="GO" id="GO:0019353">
    <property type="term" value="P:protoporphyrinogen IX biosynthetic process from glutamate"/>
    <property type="evidence" value="ECO:0007669"/>
    <property type="project" value="TreeGrafter"/>
</dbReference>
<dbReference type="CDD" id="cd00717">
    <property type="entry name" value="URO-D"/>
    <property type="match status" value="1"/>
</dbReference>
<dbReference type="FunFam" id="3.20.20.210:FF:000007">
    <property type="entry name" value="Uroporphyrinogen decarboxylase"/>
    <property type="match status" value="1"/>
</dbReference>
<dbReference type="Gene3D" id="3.20.20.210">
    <property type="match status" value="1"/>
</dbReference>
<dbReference type="HAMAP" id="MF_00218">
    <property type="entry name" value="URO_D"/>
    <property type="match status" value="1"/>
</dbReference>
<dbReference type="InterPro" id="IPR038071">
    <property type="entry name" value="UROD/MetE-like_sf"/>
</dbReference>
<dbReference type="InterPro" id="IPR006361">
    <property type="entry name" value="Uroporphyrinogen_deCO2ase_HemE"/>
</dbReference>
<dbReference type="InterPro" id="IPR000257">
    <property type="entry name" value="Uroporphyrinogen_deCOase"/>
</dbReference>
<dbReference type="NCBIfam" id="TIGR01464">
    <property type="entry name" value="hemE"/>
    <property type="match status" value="1"/>
</dbReference>
<dbReference type="PANTHER" id="PTHR21091">
    <property type="entry name" value="METHYLTETRAHYDROFOLATE:HOMOCYSTEINE METHYLTRANSFERASE RELATED"/>
    <property type="match status" value="1"/>
</dbReference>
<dbReference type="PANTHER" id="PTHR21091:SF169">
    <property type="entry name" value="UROPORPHYRINOGEN DECARBOXYLASE"/>
    <property type="match status" value="1"/>
</dbReference>
<dbReference type="Pfam" id="PF01208">
    <property type="entry name" value="URO-D"/>
    <property type="match status" value="1"/>
</dbReference>
<dbReference type="SUPFAM" id="SSF51726">
    <property type="entry name" value="UROD/MetE-like"/>
    <property type="match status" value="1"/>
</dbReference>
<dbReference type="PROSITE" id="PS00906">
    <property type="entry name" value="UROD_1"/>
    <property type="match status" value="1"/>
</dbReference>
<dbReference type="PROSITE" id="PS00907">
    <property type="entry name" value="UROD_2"/>
    <property type="match status" value="1"/>
</dbReference>
<proteinExistence type="inferred from homology"/>
<accession>Q2YR07</accession>
<protein>
    <recommendedName>
        <fullName evidence="1">Uroporphyrinogen decarboxylase</fullName>
        <shortName evidence="1">UPD</shortName>
        <shortName evidence="1">URO-D</shortName>
        <ecNumber evidence="1">4.1.1.37</ecNumber>
    </recommendedName>
</protein>
<sequence>MNRKVLKVIDGETVFPPPIWMMRQAGRYLPEYRETRKKAGSFLDLCYSPDLAVEVTLQPIRRFGFDAAILFSDILVVPHALGRDLRFEEGKGPLMTPIDADEIFWLETEGVAKRLEPVYETVRLVREQLPDETTLLGFCGAPWTVATYMIAGHGTPDQAPARLFAYRFPEAFEKLLNDLADVSAEYLIEQLGAGADAVQIFDSWSGVLDEDCFERFCIRPVARIVQKVRAVYPQARIIGFPKGAGMLYAGYREKTGVDMLGLDWSVPLSFAALLQEEGAVQGNLDPLRVVAGGNALDEGVDAILERMGQGPLVFNLGHGITPQAPIENVQRMIDRVRGGKS</sequence>
<reference key="1">
    <citation type="journal article" date="2005" name="Infect. Immun.">
        <title>Whole-genome analyses of speciation events in pathogenic Brucellae.</title>
        <authorList>
            <person name="Chain P.S."/>
            <person name="Comerci D.J."/>
            <person name="Tolmasky M.E."/>
            <person name="Larimer F.W."/>
            <person name="Malfatti S.A."/>
            <person name="Vergez L.M."/>
            <person name="Aguero F."/>
            <person name="Land M.L."/>
            <person name="Ugalde R.A."/>
            <person name="Garcia E."/>
        </authorList>
    </citation>
    <scope>NUCLEOTIDE SEQUENCE [LARGE SCALE GENOMIC DNA]</scope>
    <source>
        <strain>2308</strain>
    </source>
</reference>